<feature type="chain" id="PRO_0000270969" description="34 kDa protein">
    <location>
        <begin position="1"/>
        <end position="10" status="greater than"/>
    </location>
</feature>
<feature type="non-terminal residue" evidence="2">
    <location>
        <position position="10"/>
    </location>
</feature>
<evidence type="ECO:0000269" key="1">
    <source>
    </source>
</evidence>
<evidence type="ECO:0000303" key="2">
    <source>
    </source>
</evidence>
<evidence type="ECO:0000305" key="3"/>
<reference evidence="3" key="1">
    <citation type="journal article" date="2001" name="J. Appl. Microbiol.">
        <title>Heat and salt stress in the food pathogen Bacillus cereus.</title>
        <authorList>
            <person name="Browne N."/>
            <person name="Dowds B.C.A."/>
        </authorList>
    </citation>
    <scope>PROTEIN SEQUENCE</scope>
    <scope>INDUCTION</scope>
    <source>
        <strain evidence="1">DSM 626 / NCIMB 11796 / T</strain>
    </source>
</reference>
<sequence length="10" mass="1124">MLVGMTEMVN</sequence>
<comment type="induction">
    <text evidence="1">By salt stress and heat shock.</text>
</comment>
<name>34KD_BACCE</name>
<proteinExistence type="evidence at protein level"/>
<keyword id="KW-0903">Direct protein sequencing</keyword>
<keyword id="KW-0346">Stress response</keyword>
<accession>P83064</accession>
<protein>
    <recommendedName>
        <fullName>34 kDa protein</fullName>
    </recommendedName>
</protein>
<organism>
    <name type="scientific">Bacillus cereus</name>
    <dbReference type="NCBI Taxonomy" id="1396"/>
    <lineage>
        <taxon>Bacteria</taxon>
        <taxon>Bacillati</taxon>
        <taxon>Bacillota</taxon>
        <taxon>Bacilli</taxon>
        <taxon>Bacillales</taxon>
        <taxon>Bacillaceae</taxon>
        <taxon>Bacillus</taxon>
        <taxon>Bacillus cereus group</taxon>
    </lineage>
</organism>